<gene>
    <name type="primary">Mrpl16</name>
</gene>
<organism>
    <name type="scientific">Rattus norvegicus</name>
    <name type="common">Rat</name>
    <dbReference type="NCBI Taxonomy" id="10116"/>
    <lineage>
        <taxon>Eukaryota</taxon>
        <taxon>Metazoa</taxon>
        <taxon>Chordata</taxon>
        <taxon>Craniata</taxon>
        <taxon>Vertebrata</taxon>
        <taxon>Euteleostomi</taxon>
        <taxon>Mammalia</taxon>
        <taxon>Eutheria</taxon>
        <taxon>Euarchontoglires</taxon>
        <taxon>Glires</taxon>
        <taxon>Rodentia</taxon>
        <taxon>Myomorpha</taxon>
        <taxon>Muroidea</taxon>
        <taxon>Muridae</taxon>
        <taxon>Murinae</taxon>
        <taxon>Rattus</taxon>
    </lineage>
</organism>
<evidence type="ECO:0000250" key="1">
    <source>
        <dbReference type="UniProtKB" id="Q3T0J3"/>
    </source>
</evidence>
<evidence type="ECO:0000250" key="2">
    <source>
        <dbReference type="UniProtKB" id="Q9NX20"/>
    </source>
</evidence>
<evidence type="ECO:0000305" key="3"/>
<accession>Q5M818</accession>
<sequence>MWRLLTRAPAPLWRMHFSDTWAALPTSAGLKTLLPVPTFENVSIPERSKLKFVERVPLVPKVRREPKNLKDIRGPSAEATDFTEGNFAILALGGGYLHWGHFEMMRLTINRFMDPKNMFAIWRVPAPFKPITRKGVGQRMGGGKGAIDHYVTPVKTGCLIVEMGGRCEFEEVKRVLNQVAHKLPFPAKAVSRKTLEKMHQNQKERELNNQNPWTFERIATANMFGIRKFLSPYDLTQKGRYWGKFYMPKRV</sequence>
<proteinExistence type="evidence at transcript level"/>
<feature type="transit peptide" description="Mitochondrion" evidence="1">
    <location>
        <begin position="1"/>
        <end position="29"/>
    </location>
</feature>
<feature type="chain" id="PRO_0000239844" description="Large ribosomal subunit protein uL16m">
    <location>
        <begin position="30"/>
        <end position="251"/>
    </location>
</feature>
<reference key="1">
    <citation type="journal article" date="2004" name="Genome Res.">
        <title>The status, quality, and expansion of the NIH full-length cDNA project: the Mammalian Gene Collection (MGC).</title>
        <authorList>
            <consortium name="The MGC Project Team"/>
        </authorList>
    </citation>
    <scope>NUCLEOTIDE SEQUENCE [LARGE SCALE MRNA]</scope>
    <source>
        <tissue>Liver</tissue>
    </source>
</reference>
<comment type="subunit">
    <text evidence="2">Component of the mitochondrial ribosome large subunit (39S) which comprises a 16S rRNA and about 50 distinct proteins.</text>
</comment>
<comment type="subcellular location">
    <subcellularLocation>
        <location evidence="2">Mitochondrion</location>
    </subcellularLocation>
</comment>
<comment type="similarity">
    <text evidence="3">Belongs to the universal ribosomal protein uL16 family.</text>
</comment>
<name>RM16_RAT</name>
<keyword id="KW-0496">Mitochondrion</keyword>
<keyword id="KW-1185">Reference proteome</keyword>
<keyword id="KW-0687">Ribonucleoprotein</keyword>
<keyword id="KW-0689">Ribosomal protein</keyword>
<keyword id="KW-0809">Transit peptide</keyword>
<protein>
    <recommendedName>
        <fullName evidence="3">Large ribosomal subunit protein uL16m</fullName>
    </recommendedName>
    <alternativeName>
        <fullName>39S ribosomal protein L16, mitochondrial</fullName>
        <shortName>L16mt</shortName>
        <shortName>MRP-L16</shortName>
    </alternativeName>
</protein>
<dbReference type="EMBL" id="BC088312">
    <property type="protein sequence ID" value="AAH88312.1"/>
    <property type="molecule type" value="mRNA"/>
</dbReference>
<dbReference type="RefSeq" id="NP_001009647.1">
    <property type="nucleotide sequence ID" value="NM_001009647.1"/>
</dbReference>
<dbReference type="SMR" id="Q5M818"/>
<dbReference type="FunCoup" id="Q5M818">
    <property type="interactions" value="1463"/>
</dbReference>
<dbReference type="STRING" id="10116.ENSRNOP00000028517"/>
<dbReference type="iPTMnet" id="Q5M818"/>
<dbReference type="PhosphoSitePlus" id="Q5M818"/>
<dbReference type="PaxDb" id="10116-ENSRNOP00000028517"/>
<dbReference type="Ensembl" id="ENSRNOT00000028517.8">
    <property type="protein sequence ID" value="ENSRNOP00000028517.4"/>
    <property type="gene ID" value="ENSRNOG00000021005.8"/>
</dbReference>
<dbReference type="GeneID" id="293754"/>
<dbReference type="KEGG" id="rno:293754"/>
<dbReference type="UCSC" id="RGD:735195">
    <property type="organism name" value="rat"/>
</dbReference>
<dbReference type="AGR" id="RGD:735195"/>
<dbReference type="CTD" id="54948"/>
<dbReference type="RGD" id="735195">
    <property type="gene designation" value="Mrpl16"/>
</dbReference>
<dbReference type="eggNOG" id="KOG3422">
    <property type="taxonomic scope" value="Eukaryota"/>
</dbReference>
<dbReference type="GeneTree" id="ENSGT00390000002038"/>
<dbReference type="HOGENOM" id="CLU_096518_0_0_1"/>
<dbReference type="InParanoid" id="Q5M818"/>
<dbReference type="OMA" id="WGHMEMM"/>
<dbReference type="OrthoDB" id="268521at2759"/>
<dbReference type="PhylomeDB" id="Q5M818"/>
<dbReference type="TreeFam" id="TF312969"/>
<dbReference type="Reactome" id="R-RNO-5389840">
    <property type="pathway name" value="Mitochondrial translation elongation"/>
</dbReference>
<dbReference type="Reactome" id="R-RNO-5419276">
    <property type="pathway name" value="Mitochondrial translation termination"/>
</dbReference>
<dbReference type="PRO" id="PR:Q5M818"/>
<dbReference type="Proteomes" id="UP000002494">
    <property type="component" value="Chromosome 1"/>
</dbReference>
<dbReference type="Bgee" id="ENSRNOG00000021005">
    <property type="expression patterns" value="Expressed in heart and 20 other cell types or tissues"/>
</dbReference>
<dbReference type="GO" id="GO:0005762">
    <property type="term" value="C:mitochondrial large ribosomal subunit"/>
    <property type="evidence" value="ECO:0000250"/>
    <property type="project" value="UniProtKB"/>
</dbReference>
<dbReference type="GO" id="GO:0005763">
    <property type="term" value="C:mitochondrial small ribosomal subunit"/>
    <property type="evidence" value="ECO:0000250"/>
    <property type="project" value="UniProtKB"/>
</dbReference>
<dbReference type="GO" id="GO:0005739">
    <property type="term" value="C:mitochondrion"/>
    <property type="evidence" value="ECO:0000266"/>
    <property type="project" value="RGD"/>
</dbReference>
<dbReference type="GO" id="GO:0019843">
    <property type="term" value="F:rRNA binding"/>
    <property type="evidence" value="ECO:0000318"/>
    <property type="project" value="GO_Central"/>
</dbReference>
<dbReference type="GO" id="GO:0003735">
    <property type="term" value="F:structural constituent of ribosome"/>
    <property type="evidence" value="ECO:0000318"/>
    <property type="project" value="GO_Central"/>
</dbReference>
<dbReference type="GO" id="GO:0032543">
    <property type="term" value="P:mitochondrial translation"/>
    <property type="evidence" value="ECO:0000318"/>
    <property type="project" value="GO_Central"/>
</dbReference>
<dbReference type="CDD" id="cd01433">
    <property type="entry name" value="Ribosomal_L16_L10e"/>
    <property type="match status" value="1"/>
</dbReference>
<dbReference type="FunFam" id="3.90.1170.10:FF:000005">
    <property type="entry name" value="39S ribosomal protein L16, mitochondrial"/>
    <property type="match status" value="1"/>
</dbReference>
<dbReference type="Gene3D" id="3.90.1170.10">
    <property type="entry name" value="Ribosomal protein L10e/L16"/>
    <property type="match status" value="1"/>
</dbReference>
<dbReference type="InterPro" id="IPR047873">
    <property type="entry name" value="Ribosomal_uL16"/>
</dbReference>
<dbReference type="InterPro" id="IPR000114">
    <property type="entry name" value="Ribosomal_uL16_bact-type"/>
</dbReference>
<dbReference type="InterPro" id="IPR016180">
    <property type="entry name" value="Ribosomal_uL16_dom"/>
</dbReference>
<dbReference type="InterPro" id="IPR036920">
    <property type="entry name" value="Ribosomal_uL16_sf"/>
</dbReference>
<dbReference type="PANTHER" id="PTHR12220">
    <property type="entry name" value="50S/60S RIBOSOMAL PROTEIN L16"/>
    <property type="match status" value="1"/>
</dbReference>
<dbReference type="PANTHER" id="PTHR12220:SF13">
    <property type="entry name" value="LARGE RIBOSOMAL SUBUNIT PROTEIN UL16M"/>
    <property type="match status" value="1"/>
</dbReference>
<dbReference type="Pfam" id="PF00252">
    <property type="entry name" value="Ribosomal_L16"/>
    <property type="match status" value="1"/>
</dbReference>
<dbReference type="PRINTS" id="PR00060">
    <property type="entry name" value="RIBOSOMALL16"/>
</dbReference>
<dbReference type="SUPFAM" id="SSF54686">
    <property type="entry name" value="Ribosomal protein L16p/L10e"/>
    <property type="match status" value="1"/>
</dbReference>